<protein>
    <recommendedName>
        <fullName>Gene 5.7 protein</fullName>
    </recommendedName>
</protein>
<feature type="chain" id="PRO_0000106501" description="Gene 5.7 protein">
    <location>
        <begin position="1"/>
        <end position="69"/>
    </location>
</feature>
<reference key="1">
    <citation type="journal article" date="1989" name="J. Mol. Biol.">
        <title>Sequence of bacteriophage T3 DNA from gene 2.5 through gene 9.</title>
        <authorList>
            <person name="Beck P.J."/>
            <person name="Gonzalez S."/>
            <person name="Ward C.L."/>
            <person name="Molineux I.J."/>
        </authorList>
    </citation>
    <scope>NUCLEOTIDE SEQUENCE [GENOMIC DNA]</scope>
    <source>
        <strain>Luria</strain>
    </source>
</reference>
<gene>
    <name type="primary">5.7</name>
</gene>
<comment type="function">
    <text>Allows growth on lambda lysogens.</text>
</comment>
<name>V57_BPT3</name>
<sequence length="69" mass="7381">MSDYLKVLQAIKGCPKTFQSNYVRNNASLVAEAASRGHISCLTTSGRNGGAWEITASGTRFLKRMGGCV</sequence>
<organism>
    <name type="scientific">Enterobacteria phage T3</name>
    <name type="common">Bacteriophage T3</name>
    <dbReference type="NCBI Taxonomy" id="10759"/>
    <lineage>
        <taxon>Viruses</taxon>
        <taxon>Duplodnaviria</taxon>
        <taxon>Heunggongvirae</taxon>
        <taxon>Uroviricota</taxon>
        <taxon>Caudoviricetes</taxon>
        <taxon>Autographiviridae</taxon>
        <taxon>Studiervirinae</taxon>
        <taxon>Teetrevirus</taxon>
        <taxon>Teetrevirus T3</taxon>
    </lineage>
</organism>
<proteinExistence type="predicted"/>
<dbReference type="EMBL" id="X17255">
    <property type="protein sequence ID" value="CAA35145.1"/>
    <property type="molecule type" value="Genomic_DNA"/>
</dbReference>
<dbReference type="PIR" id="S07516">
    <property type="entry name" value="S07516"/>
</dbReference>
<dbReference type="RefSeq" id="NP_523325.1">
    <property type="nucleotide sequence ID" value="NC_003298.1"/>
</dbReference>
<dbReference type="SMR" id="P20320"/>
<dbReference type="KEGG" id="vg:927423"/>
<dbReference type="OrthoDB" id="16719at10239"/>
<organismHost>
    <name type="scientific">Escherichia coli</name>
    <dbReference type="NCBI Taxonomy" id="562"/>
</organismHost>
<accession>P20320</accession>